<dbReference type="EMBL" id="CP000107">
    <property type="protein sequence ID" value="AAZ68643.1"/>
    <property type="molecule type" value="Genomic_DNA"/>
</dbReference>
<dbReference type="RefSeq" id="WP_011304721.1">
    <property type="nucleotide sequence ID" value="NC_007354.1"/>
</dbReference>
<dbReference type="SMR" id="Q3YRL2"/>
<dbReference type="FunCoup" id="Q3YRL2">
    <property type="interactions" value="371"/>
</dbReference>
<dbReference type="STRING" id="269484.Ecaj_0609"/>
<dbReference type="KEGG" id="ecn:Ecaj_0609"/>
<dbReference type="eggNOG" id="COG0090">
    <property type="taxonomic scope" value="Bacteria"/>
</dbReference>
<dbReference type="HOGENOM" id="CLU_036235_2_1_5"/>
<dbReference type="InParanoid" id="Q3YRL2"/>
<dbReference type="Proteomes" id="UP000000435">
    <property type="component" value="Chromosome"/>
</dbReference>
<dbReference type="GO" id="GO:0015934">
    <property type="term" value="C:large ribosomal subunit"/>
    <property type="evidence" value="ECO:0007669"/>
    <property type="project" value="InterPro"/>
</dbReference>
<dbReference type="GO" id="GO:0019843">
    <property type="term" value="F:rRNA binding"/>
    <property type="evidence" value="ECO:0007669"/>
    <property type="project" value="UniProtKB-UniRule"/>
</dbReference>
<dbReference type="GO" id="GO:0003735">
    <property type="term" value="F:structural constituent of ribosome"/>
    <property type="evidence" value="ECO:0007669"/>
    <property type="project" value="InterPro"/>
</dbReference>
<dbReference type="GO" id="GO:0016740">
    <property type="term" value="F:transferase activity"/>
    <property type="evidence" value="ECO:0007669"/>
    <property type="project" value="InterPro"/>
</dbReference>
<dbReference type="GO" id="GO:0002181">
    <property type="term" value="P:cytoplasmic translation"/>
    <property type="evidence" value="ECO:0007669"/>
    <property type="project" value="TreeGrafter"/>
</dbReference>
<dbReference type="FunFam" id="2.30.30.30:FF:000001">
    <property type="entry name" value="50S ribosomal protein L2"/>
    <property type="match status" value="1"/>
</dbReference>
<dbReference type="FunFam" id="2.40.50.140:FF:000003">
    <property type="entry name" value="50S ribosomal protein L2"/>
    <property type="match status" value="1"/>
</dbReference>
<dbReference type="FunFam" id="4.10.950.10:FF:000001">
    <property type="entry name" value="50S ribosomal protein L2"/>
    <property type="match status" value="1"/>
</dbReference>
<dbReference type="Gene3D" id="2.30.30.30">
    <property type="match status" value="1"/>
</dbReference>
<dbReference type="Gene3D" id="2.40.50.140">
    <property type="entry name" value="Nucleic acid-binding proteins"/>
    <property type="match status" value="1"/>
</dbReference>
<dbReference type="Gene3D" id="4.10.950.10">
    <property type="entry name" value="Ribosomal protein L2, domain 3"/>
    <property type="match status" value="1"/>
</dbReference>
<dbReference type="HAMAP" id="MF_01320_B">
    <property type="entry name" value="Ribosomal_uL2_B"/>
    <property type="match status" value="1"/>
</dbReference>
<dbReference type="InterPro" id="IPR012340">
    <property type="entry name" value="NA-bd_OB-fold"/>
</dbReference>
<dbReference type="InterPro" id="IPR014722">
    <property type="entry name" value="Rib_uL2_dom2"/>
</dbReference>
<dbReference type="InterPro" id="IPR002171">
    <property type="entry name" value="Ribosomal_uL2"/>
</dbReference>
<dbReference type="InterPro" id="IPR005880">
    <property type="entry name" value="Ribosomal_uL2_bac/org-type"/>
</dbReference>
<dbReference type="InterPro" id="IPR022669">
    <property type="entry name" value="Ribosomal_uL2_C"/>
</dbReference>
<dbReference type="InterPro" id="IPR022671">
    <property type="entry name" value="Ribosomal_uL2_CS"/>
</dbReference>
<dbReference type="InterPro" id="IPR014726">
    <property type="entry name" value="Ribosomal_uL2_dom3"/>
</dbReference>
<dbReference type="InterPro" id="IPR022666">
    <property type="entry name" value="Ribosomal_uL2_RNA-bd_dom"/>
</dbReference>
<dbReference type="InterPro" id="IPR008991">
    <property type="entry name" value="Translation_prot_SH3-like_sf"/>
</dbReference>
<dbReference type="NCBIfam" id="TIGR01171">
    <property type="entry name" value="rplB_bact"/>
    <property type="match status" value="1"/>
</dbReference>
<dbReference type="PANTHER" id="PTHR13691:SF5">
    <property type="entry name" value="LARGE RIBOSOMAL SUBUNIT PROTEIN UL2M"/>
    <property type="match status" value="1"/>
</dbReference>
<dbReference type="PANTHER" id="PTHR13691">
    <property type="entry name" value="RIBOSOMAL PROTEIN L2"/>
    <property type="match status" value="1"/>
</dbReference>
<dbReference type="Pfam" id="PF00181">
    <property type="entry name" value="Ribosomal_L2"/>
    <property type="match status" value="1"/>
</dbReference>
<dbReference type="Pfam" id="PF03947">
    <property type="entry name" value="Ribosomal_L2_C"/>
    <property type="match status" value="1"/>
</dbReference>
<dbReference type="PIRSF" id="PIRSF002158">
    <property type="entry name" value="Ribosomal_L2"/>
    <property type="match status" value="1"/>
</dbReference>
<dbReference type="SMART" id="SM01383">
    <property type="entry name" value="Ribosomal_L2"/>
    <property type="match status" value="1"/>
</dbReference>
<dbReference type="SMART" id="SM01382">
    <property type="entry name" value="Ribosomal_L2_C"/>
    <property type="match status" value="1"/>
</dbReference>
<dbReference type="SUPFAM" id="SSF50249">
    <property type="entry name" value="Nucleic acid-binding proteins"/>
    <property type="match status" value="1"/>
</dbReference>
<dbReference type="SUPFAM" id="SSF50104">
    <property type="entry name" value="Translation proteins SH3-like domain"/>
    <property type="match status" value="1"/>
</dbReference>
<dbReference type="PROSITE" id="PS00467">
    <property type="entry name" value="RIBOSOMAL_L2"/>
    <property type="match status" value="1"/>
</dbReference>
<gene>
    <name evidence="1" type="primary">rplB</name>
    <name type="ordered locus">Ecaj_0609</name>
</gene>
<sequence length="276" mass="30003">MGIKNLNSVTASLRGTVLLDKSMLWKGKPEKSLVSYKISCGGRNSRGVITVRHRGRGHKRLYRIIDFKRNKVGVSATVERLEYDPNRTAFIALLSYDDGEKSYIIAPNGLKKGDVVISGEGSDILPGNCLMLKSIPVGTFVHNVELRPGNGGVIARSAGTYAQLMSKDGVYVLLRLSSGEIRKVLSDCRATIGIVSNLDNQNVKLGKAGRNRWLGIRPTVRGVAMNPIDHPHGGGEGKTSGGRNPVTPWGVPTKGKKTRKRNKSSNKYIKRVSDKG</sequence>
<proteinExistence type="inferred from homology"/>
<evidence type="ECO:0000255" key="1">
    <source>
        <dbReference type="HAMAP-Rule" id="MF_01320"/>
    </source>
</evidence>
<evidence type="ECO:0000256" key="2">
    <source>
        <dbReference type="SAM" id="MobiDB-lite"/>
    </source>
</evidence>
<evidence type="ECO:0000305" key="3"/>
<comment type="function">
    <text evidence="1">One of the primary rRNA binding proteins. Required for association of the 30S and 50S subunits to form the 70S ribosome, for tRNA binding and peptide bond formation. It has been suggested to have peptidyltransferase activity; this is somewhat controversial. Makes several contacts with the 16S rRNA in the 70S ribosome.</text>
</comment>
<comment type="subunit">
    <text evidence="1">Part of the 50S ribosomal subunit. Forms a bridge to the 30S subunit in the 70S ribosome.</text>
</comment>
<comment type="similarity">
    <text evidence="1">Belongs to the universal ribosomal protein uL2 family.</text>
</comment>
<keyword id="KW-0687">Ribonucleoprotein</keyword>
<keyword id="KW-0689">Ribosomal protein</keyword>
<keyword id="KW-0694">RNA-binding</keyword>
<keyword id="KW-0699">rRNA-binding</keyword>
<reference key="1">
    <citation type="journal article" date="2006" name="J. Bacteriol.">
        <title>The genome of the obligately intracellular bacterium Ehrlichia canis reveals themes of complex membrane structure and immune evasion strategies.</title>
        <authorList>
            <person name="Mavromatis K."/>
            <person name="Doyle C.K."/>
            <person name="Lykidis A."/>
            <person name="Ivanova N."/>
            <person name="Francino M.P."/>
            <person name="Chain P."/>
            <person name="Shin M."/>
            <person name="Malfatti S."/>
            <person name="Larimer F."/>
            <person name="Copeland A."/>
            <person name="Detter J.C."/>
            <person name="Land M."/>
            <person name="Richardson P.M."/>
            <person name="Yu X.J."/>
            <person name="Walker D.H."/>
            <person name="McBride J.W."/>
            <person name="Kyrpides N.C."/>
        </authorList>
    </citation>
    <scope>NUCLEOTIDE SEQUENCE [LARGE SCALE GENOMIC DNA]</scope>
    <source>
        <strain>Jake</strain>
    </source>
</reference>
<accession>Q3YRL2</accession>
<organism>
    <name type="scientific">Ehrlichia canis (strain Jake)</name>
    <dbReference type="NCBI Taxonomy" id="269484"/>
    <lineage>
        <taxon>Bacteria</taxon>
        <taxon>Pseudomonadati</taxon>
        <taxon>Pseudomonadota</taxon>
        <taxon>Alphaproteobacteria</taxon>
        <taxon>Rickettsiales</taxon>
        <taxon>Anaplasmataceae</taxon>
        <taxon>Ehrlichia</taxon>
    </lineage>
</organism>
<protein>
    <recommendedName>
        <fullName evidence="1">Large ribosomal subunit protein uL2</fullName>
    </recommendedName>
    <alternativeName>
        <fullName evidence="3">50S ribosomal protein L2</fullName>
    </alternativeName>
</protein>
<feature type="chain" id="PRO_0000237182" description="Large ribosomal subunit protein uL2">
    <location>
        <begin position="1"/>
        <end position="276"/>
    </location>
</feature>
<feature type="region of interest" description="Disordered" evidence="2">
    <location>
        <begin position="224"/>
        <end position="276"/>
    </location>
</feature>
<feature type="compositionally biased region" description="Basic residues" evidence="2">
    <location>
        <begin position="254"/>
        <end position="270"/>
    </location>
</feature>
<name>RL2_EHRCJ</name>